<gene>
    <name evidence="1" type="primary">rnpA</name>
    <name type="ordered locus">CLJ_B3986</name>
</gene>
<accession>C3KWJ9</accession>
<feature type="chain" id="PRO_1000204339" description="Ribonuclease P protein component">
    <location>
        <begin position="1"/>
        <end position="111"/>
    </location>
</feature>
<proteinExistence type="inferred from homology"/>
<organism>
    <name type="scientific">Clostridium botulinum (strain 657 / Type Ba4)</name>
    <dbReference type="NCBI Taxonomy" id="515621"/>
    <lineage>
        <taxon>Bacteria</taxon>
        <taxon>Bacillati</taxon>
        <taxon>Bacillota</taxon>
        <taxon>Clostridia</taxon>
        <taxon>Eubacteriales</taxon>
        <taxon>Clostridiaceae</taxon>
        <taxon>Clostridium</taxon>
    </lineage>
</organism>
<name>RNPA_CLOB6</name>
<reference key="1">
    <citation type="submission" date="2008-05" db="EMBL/GenBank/DDBJ databases">
        <title>Genome sequence of Clostridium botulinum Ba4 strain 657.</title>
        <authorList>
            <person name="Shrivastava S."/>
            <person name="Brown J.L."/>
            <person name="Bruce D."/>
            <person name="Detter C."/>
            <person name="Munk C."/>
            <person name="Smith L.A."/>
            <person name="Smith T.J."/>
            <person name="Sutton G."/>
            <person name="Brettin T.S."/>
        </authorList>
    </citation>
    <scope>NUCLEOTIDE SEQUENCE [LARGE SCALE GENOMIC DNA]</scope>
    <source>
        <strain>657 / Type Ba4</strain>
    </source>
</reference>
<evidence type="ECO:0000255" key="1">
    <source>
        <dbReference type="HAMAP-Rule" id="MF_00227"/>
    </source>
</evidence>
<dbReference type="EC" id="3.1.26.5" evidence="1"/>
<dbReference type="EMBL" id="CP001083">
    <property type="protein sequence ID" value="ACQ54736.1"/>
    <property type="molecule type" value="Genomic_DNA"/>
</dbReference>
<dbReference type="RefSeq" id="WP_003361825.1">
    <property type="nucleotide sequence ID" value="NC_012658.1"/>
</dbReference>
<dbReference type="SMR" id="C3KWJ9"/>
<dbReference type="KEGG" id="cbi:CLJ_B3986"/>
<dbReference type="HOGENOM" id="CLU_117179_9_3_9"/>
<dbReference type="Proteomes" id="UP000002333">
    <property type="component" value="Chromosome"/>
</dbReference>
<dbReference type="GO" id="GO:0030677">
    <property type="term" value="C:ribonuclease P complex"/>
    <property type="evidence" value="ECO:0007669"/>
    <property type="project" value="TreeGrafter"/>
</dbReference>
<dbReference type="GO" id="GO:0042781">
    <property type="term" value="F:3'-tRNA processing endoribonuclease activity"/>
    <property type="evidence" value="ECO:0007669"/>
    <property type="project" value="TreeGrafter"/>
</dbReference>
<dbReference type="GO" id="GO:0004526">
    <property type="term" value="F:ribonuclease P activity"/>
    <property type="evidence" value="ECO:0007669"/>
    <property type="project" value="UniProtKB-UniRule"/>
</dbReference>
<dbReference type="GO" id="GO:0000049">
    <property type="term" value="F:tRNA binding"/>
    <property type="evidence" value="ECO:0007669"/>
    <property type="project" value="UniProtKB-UniRule"/>
</dbReference>
<dbReference type="GO" id="GO:0001682">
    <property type="term" value="P:tRNA 5'-leader removal"/>
    <property type="evidence" value="ECO:0007669"/>
    <property type="project" value="UniProtKB-UniRule"/>
</dbReference>
<dbReference type="Gene3D" id="3.30.230.10">
    <property type="match status" value="1"/>
</dbReference>
<dbReference type="HAMAP" id="MF_00227">
    <property type="entry name" value="RNase_P"/>
    <property type="match status" value="1"/>
</dbReference>
<dbReference type="InterPro" id="IPR020568">
    <property type="entry name" value="Ribosomal_Su5_D2-typ_SF"/>
</dbReference>
<dbReference type="InterPro" id="IPR014721">
    <property type="entry name" value="Ribsml_uS5_D2-typ_fold_subgr"/>
</dbReference>
<dbReference type="InterPro" id="IPR000100">
    <property type="entry name" value="RNase_P"/>
</dbReference>
<dbReference type="NCBIfam" id="TIGR00188">
    <property type="entry name" value="rnpA"/>
    <property type="match status" value="1"/>
</dbReference>
<dbReference type="PANTHER" id="PTHR33992">
    <property type="entry name" value="RIBONUCLEASE P PROTEIN COMPONENT"/>
    <property type="match status" value="1"/>
</dbReference>
<dbReference type="PANTHER" id="PTHR33992:SF1">
    <property type="entry name" value="RIBONUCLEASE P PROTEIN COMPONENT"/>
    <property type="match status" value="1"/>
</dbReference>
<dbReference type="Pfam" id="PF00825">
    <property type="entry name" value="Ribonuclease_P"/>
    <property type="match status" value="1"/>
</dbReference>
<dbReference type="SUPFAM" id="SSF54211">
    <property type="entry name" value="Ribosomal protein S5 domain 2-like"/>
    <property type="match status" value="1"/>
</dbReference>
<protein>
    <recommendedName>
        <fullName evidence="1">Ribonuclease P protein component</fullName>
        <shortName evidence="1">RNase P protein</shortName>
        <shortName evidence="1">RNaseP protein</shortName>
        <ecNumber evidence="1">3.1.26.5</ecNumber>
    </recommendedName>
    <alternativeName>
        <fullName evidence="1">Protein C5</fullName>
    </alternativeName>
</protein>
<sequence length="111" mass="13160">MKENKIRKNKEFRHVYRRGKSYSNKLLVLYVCKNRYNINRLGVSVSKKVGKSVVRNKVKRLIKESYRLNLDKDMKRGYDLVFIARNSSNDKDYKDIESALINLLKKAGIYN</sequence>
<comment type="function">
    <text evidence="1">RNaseP catalyzes the removal of the 5'-leader sequence from pre-tRNA to produce the mature 5'-terminus. It can also cleave other RNA substrates such as 4.5S RNA. The protein component plays an auxiliary but essential role in vivo by binding to the 5'-leader sequence and broadening the substrate specificity of the ribozyme.</text>
</comment>
<comment type="catalytic activity">
    <reaction evidence="1">
        <text>Endonucleolytic cleavage of RNA, removing 5'-extranucleotides from tRNA precursor.</text>
        <dbReference type="EC" id="3.1.26.5"/>
    </reaction>
</comment>
<comment type="subunit">
    <text evidence="1">Consists of a catalytic RNA component (M1 or rnpB) and a protein subunit.</text>
</comment>
<comment type="similarity">
    <text evidence="1">Belongs to the RnpA family.</text>
</comment>
<keyword id="KW-0255">Endonuclease</keyword>
<keyword id="KW-0378">Hydrolase</keyword>
<keyword id="KW-0540">Nuclease</keyword>
<keyword id="KW-0694">RNA-binding</keyword>
<keyword id="KW-0819">tRNA processing</keyword>